<proteinExistence type="inferred from homology"/>
<gene>
    <name evidence="1" type="primary">ribBA</name>
    <name type="ordered locus">BT9727_3853</name>
</gene>
<dbReference type="EC" id="4.1.99.12" evidence="1"/>
<dbReference type="EC" id="3.5.4.25" evidence="1"/>
<dbReference type="EMBL" id="AE017355">
    <property type="protein sequence ID" value="AAT63107.1"/>
    <property type="molecule type" value="Genomic_DNA"/>
</dbReference>
<dbReference type="RefSeq" id="WP_000469013.1">
    <property type="nucleotide sequence ID" value="NC_005957.1"/>
</dbReference>
<dbReference type="RefSeq" id="YP_038172.1">
    <property type="nucleotide sequence ID" value="NC_005957.1"/>
</dbReference>
<dbReference type="SMR" id="Q6HE54"/>
<dbReference type="GeneID" id="45024000"/>
<dbReference type="KEGG" id="btk:BT9727_3853"/>
<dbReference type="PATRIC" id="fig|281309.8.peg.4108"/>
<dbReference type="HOGENOM" id="CLU_020273_1_2_9"/>
<dbReference type="UniPathway" id="UPA00275">
    <property type="reaction ID" value="UER00399"/>
</dbReference>
<dbReference type="UniPathway" id="UPA00275">
    <property type="reaction ID" value="UER00400"/>
</dbReference>
<dbReference type="Proteomes" id="UP000001301">
    <property type="component" value="Chromosome"/>
</dbReference>
<dbReference type="GO" id="GO:0005829">
    <property type="term" value="C:cytosol"/>
    <property type="evidence" value="ECO:0007669"/>
    <property type="project" value="TreeGrafter"/>
</dbReference>
<dbReference type="GO" id="GO:0008686">
    <property type="term" value="F:3,4-dihydroxy-2-butanone-4-phosphate synthase activity"/>
    <property type="evidence" value="ECO:0007669"/>
    <property type="project" value="UniProtKB-UniRule"/>
</dbReference>
<dbReference type="GO" id="GO:0005525">
    <property type="term" value="F:GTP binding"/>
    <property type="evidence" value="ECO:0007669"/>
    <property type="project" value="UniProtKB-KW"/>
</dbReference>
<dbReference type="GO" id="GO:0003935">
    <property type="term" value="F:GTP cyclohydrolase II activity"/>
    <property type="evidence" value="ECO:0007669"/>
    <property type="project" value="UniProtKB-UniRule"/>
</dbReference>
<dbReference type="GO" id="GO:0000287">
    <property type="term" value="F:magnesium ion binding"/>
    <property type="evidence" value="ECO:0007669"/>
    <property type="project" value="UniProtKB-UniRule"/>
</dbReference>
<dbReference type="GO" id="GO:0030145">
    <property type="term" value="F:manganese ion binding"/>
    <property type="evidence" value="ECO:0007669"/>
    <property type="project" value="UniProtKB-UniRule"/>
</dbReference>
<dbReference type="GO" id="GO:0008270">
    <property type="term" value="F:zinc ion binding"/>
    <property type="evidence" value="ECO:0007669"/>
    <property type="project" value="UniProtKB-UniRule"/>
</dbReference>
<dbReference type="GO" id="GO:0009231">
    <property type="term" value="P:riboflavin biosynthetic process"/>
    <property type="evidence" value="ECO:0007669"/>
    <property type="project" value="UniProtKB-UniRule"/>
</dbReference>
<dbReference type="CDD" id="cd00641">
    <property type="entry name" value="GTP_cyclohydro2"/>
    <property type="match status" value="1"/>
</dbReference>
<dbReference type="FunFam" id="3.40.50.10990:FF:000001">
    <property type="entry name" value="Riboflavin biosynthesis protein RibBA"/>
    <property type="match status" value="1"/>
</dbReference>
<dbReference type="FunFam" id="3.90.870.10:FF:000001">
    <property type="entry name" value="Riboflavin biosynthesis protein RibBA"/>
    <property type="match status" value="1"/>
</dbReference>
<dbReference type="Gene3D" id="3.90.870.10">
    <property type="entry name" value="DHBP synthase"/>
    <property type="match status" value="1"/>
</dbReference>
<dbReference type="Gene3D" id="3.40.50.10990">
    <property type="entry name" value="GTP cyclohydrolase II"/>
    <property type="match status" value="1"/>
</dbReference>
<dbReference type="HAMAP" id="MF_00179">
    <property type="entry name" value="RibA"/>
    <property type="match status" value="1"/>
</dbReference>
<dbReference type="HAMAP" id="MF_00180">
    <property type="entry name" value="RibB"/>
    <property type="match status" value="1"/>
</dbReference>
<dbReference type="HAMAP" id="MF_01283">
    <property type="entry name" value="RibBA"/>
    <property type="match status" value="1"/>
</dbReference>
<dbReference type="InterPro" id="IPR017945">
    <property type="entry name" value="DHBP_synth_RibB-like_a/b_dom"/>
</dbReference>
<dbReference type="InterPro" id="IPR000422">
    <property type="entry name" value="DHBP_synthase_RibB"/>
</dbReference>
<dbReference type="InterPro" id="IPR032677">
    <property type="entry name" value="GTP_cyclohydro_II"/>
</dbReference>
<dbReference type="InterPro" id="IPR000926">
    <property type="entry name" value="RibA"/>
</dbReference>
<dbReference type="InterPro" id="IPR036144">
    <property type="entry name" value="RibA-like_sf"/>
</dbReference>
<dbReference type="InterPro" id="IPR016299">
    <property type="entry name" value="Riboflavin_synth_RibBA"/>
</dbReference>
<dbReference type="NCBIfam" id="NF001591">
    <property type="entry name" value="PRK00393.1"/>
    <property type="match status" value="1"/>
</dbReference>
<dbReference type="NCBIfam" id="NF006803">
    <property type="entry name" value="PRK09311.1"/>
    <property type="match status" value="1"/>
</dbReference>
<dbReference type="NCBIfam" id="TIGR00505">
    <property type="entry name" value="ribA"/>
    <property type="match status" value="1"/>
</dbReference>
<dbReference type="NCBIfam" id="TIGR00506">
    <property type="entry name" value="ribB"/>
    <property type="match status" value="1"/>
</dbReference>
<dbReference type="PANTHER" id="PTHR21327:SF18">
    <property type="entry name" value="3,4-DIHYDROXY-2-BUTANONE 4-PHOSPHATE SYNTHASE"/>
    <property type="match status" value="1"/>
</dbReference>
<dbReference type="PANTHER" id="PTHR21327">
    <property type="entry name" value="GTP CYCLOHYDROLASE II-RELATED"/>
    <property type="match status" value="1"/>
</dbReference>
<dbReference type="Pfam" id="PF00926">
    <property type="entry name" value="DHBP_synthase"/>
    <property type="match status" value="1"/>
</dbReference>
<dbReference type="Pfam" id="PF00925">
    <property type="entry name" value="GTP_cyclohydro2"/>
    <property type="match status" value="1"/>
</dbReference>
<dbReference type="PIRSF" id="PIRSF001259">
    <property type="entry name" value="RibA"/>
    <property type="match status" value="1"/>
</dbReference>
<dbReference type="SUPFAM" id="SSF142695">
    <property type="entry name" value="RibA-like"/>
    <property type="match status" value="1"/>
</dbReference>
<dbReference type="SUPFAM" id="SSF55821">
    <property type="entry name" value="YrdC/RibB"/>
    <property type="match status" value="1"/>
</dbReference>
<keyword id="KW-0342">GTP-binding</keyword>
<keyword id="KW-0378">Hydrolase</keyword>
<keyword id="KW-0456">Lyase</keyword>
<keyword id="KW-0460">Magnesium</keyword>
<keyword id="KW-0464">Manganese</keyword>
<keyword id="KW-0479">Metal-binding</keyword>
<keyword id="KW-0511">Multifunctional enzyme</keyword>
<keyword id="KW-0547">Nucleotide-binding</keyword>
<keyword id="KW-0686">Riboflavin biosynthesis</keyword>
<keyword id="KW-0862">Zinc</keyword>
<evidence type="ECO:0000255" key="1">
    <source>
        <dbReference type="HAMAP-Rule" id="MF_01283"/>
    </source>
</evidence>
<name>RIBBA_BACHK</name>
<comment type="function">
    <text evidence="1">Catalyzes the conversion of D-ribulose 5-phosphate to formate and 3,4-dihydroxy-2-butanone 4-phosphate.</text>
</comment>
<comment type="function">
    <text evidence="1">Catalyzes the conversion of GTP to 2,5-diamino-6-ribosylamino-4(3H)-pyrimidinone 5'-phosphate (DARP), formate and pyrophosphate.</text>
</comment>
<comment type="catalytic activity">
    <reaction evidence="1">
        <text>D-ribulose 5-phosphate = (2S)-2-hydroxy-3-oxobutyl phosphate + formate + H(+)</text>
        <dbReference type="Rhea" id="RHEA:18457"/>
        <dbReference type="ChEBI" id="CHEBI:15378"/>
        <dbReference type="ChEBI" id="CHEBI:15740"/>
        <dbReference type="ChEBI" id="CHEBI:58121"/>
        <dbReference type="ChEBI" id="CHEBI:58830"/>
        <dbReference type="EC" id="4.1.99.12"/>
    </reaction>
</comment>
<comment type="catalytic activity">
    <reaction evidence="1">
        <text>GTP + 4 H2O = 2,5-diamino-6-hydroxy-4-(5-phosphoribosylamino)-pyrimidine + formate + 2 phosphate + 3 H(+)</text>
        <dbReference type="Rhea" id="RHEA:23704"/>
        <dbReference type="ChEBI" id="CHEBI:15377"/>
        <dbReference type="ChEBI" id="CHEBI:15378"/>
        <dbReference type="ChEBI" id="CHEBI:15740"/>
        <dbReference type="ChEBI" id="CHEBI:37565"/>
        <dbReference type="ChEBI" id="CHEBI:43474"/>
        <dbReference type="ChEBI" id="CHEBI:58614"/>
        <dbReference type="EC" id="3.5.4.25"/>
    </reaction>
</comment>
<comment type="cofactor">
    <cofactor evidence="1">
        <name>Mg(2+)</name>
        <dbReference type="ChEBI" id="CHEBI:18420"/>
    </cofactor>
    <cofactor evidence="1">
        <name>Mn(2+)</name>
        <dbReference type="ChEBI" id="CHEBI:29035"/>
    </cofactor>
    <text evidence="1">Binds 2 divalent metal cations per subunit. Magnesium or manganese.</text>
</comment>
<comment type="cofactor">
    <cofactor evidence="1">
        <name>Zn(2+)</name>
        <dbReference type="ChEBI" id="CHEBI:29105"/>
    </cofactor>
    <text evidence="1">Binds 1 zinc ion per subunit.</text>
</comment>
<comment type="pathway">
    <text evidence="1">Cofactor biosynthesis; riboflavin biosynthesis; 2-hydroxy-3-oxobutyl phosphate from D-ribulose 5-phosphate: step 1/1.</text>
</comment>
<comment type="pathway">
    <text evidence="1">Cofactor biosynthesis; riboflavin biosynthesis; 5-amino-6-(D-ribitylamino)uracil from GTP: step 1/4.</text>
</comment>
<comment type="similarity">
    <text evidence="1">In the N-terminal section; belongs to the DHBP synthase family.</text>
</comment>
<comment type="similarity">
    <text evidence="1">In the C-terminal section; belongs to the GTP cyclohydrolase II family.</text>
</comment>
<feature type="chain" id="PRO_1000067419" description="Riboflavin biosynthesis protein RibBA">
    <location>
        <begin position="1"/>
        <end position="397"/>
    </location>
</feature>
<feature type="region of interest" description="DHBP synthase">
    <location>
        <begin position="1"/>
        <end position="199"/>
    </location>
</feature>
<feature type="region of interest" description="GTP cyclohydrolase II">
    <location>
        <begin position="200"/>
        <end position="397"/>
    </location>
</feature>
<feature type="active site" description="Proton acceptor; for GTP cyclohydrolase activity" evidence="1">
    <location>
        <position position="327"/>
    </location>
</feature>
<feature type="active site" description="Nucleophile; for GTP cyclohydrolase activity" evidence="1">
    <location>
        <position position="329"/>
    </location>
</feature>
<feature type="binding site" evidence="1">
    <location>
        <begin position="26"/>
        <end position="27"/>
    </location>
    <ligand>
        <name>D-ribulose 5-phosphate</name>
        <dbReference type="ChEBI" id="CHEBI:58121"/>
    </ligand>
</feature>
<feature type="binding site" evidence="1">
    <location>
        <position position="27"/>
    </location>
    <ligand>
        <name>Mg(2+)</name>
        <dbReference type="ChEBI" id="CHEBI:18420"/>
        <label>1</label>
    </ligand>
</feature>
<feature type="binding site" evidence="1">
    <location>
        <position position="27"/>
    </location>
    <ligand>
        <name>Mg(2+)</name>
        <dbReference type="ChEBI" id="CHEBI:18420"/>
        <label>2</label>
    </ligand>
</feature>
<feature type="binding site" evidence="1">
    <location>
        <position position="31"/>
    </location>
    <ligand>
        <name>D-ribulose 5-phosphate</name>
        <dbReference type="ChEBI" id="CHEBI:58121"/>
    </ligand>
</feature>
<feature type="binding site" evidence="1">
    <location>
        <begin position="138"/>
        <end position="142"/>
    </location>
    <ligand>
        <name>D-ribulose 5-phosphate</name>
        <dbReference type="ChEBI" id="CHEBI:58121"/>
    </ligand>
</feature>
<feature type="binding site" evidence="1">
    <location>
        <position position="141"/>
    </location>
    <ligand>
        <name>Mg(2+)</name>
        <dbReference type="ChEBI" id="CHEBI:18420"/>
        <label>2</label>
    </ligand>
</feature>
<feature type="binding site" evidence="1">
    <location>
        <position position="162"/>
    </location>
    <ligand>
        <name>D-ribulose 5-phosphate</name>
        <dbReference type="ChEBI" id="CHEBI:58121"/>
    </ligand>
</feature>
<feature type="binding site" evidence="1">
    <location>
        <begin position="250"/>
        <end position="254"/>
    </location>
    <ligand>
        <name>GTP</name>
        <dbReference type="ChEBI" id="CHEBI:37565"/>
    </ligand>
</feature>
<feature type="binding site" evidence="1">
    <location>
        <position position="255"/>
    </location>
    <ligand>
        <name>Zn(2+)</name>
        <dbReference type="ChEBI" id="CHEBI:29105"/>
        <note>catalytic</note>
    </ligand>
</feature>
<feature type="binding site" evidence="1">
    <location>
        <position position="266"/>
    </location>
    <ligand>
        <name>Zn(2+)</name>
        <dbReference type="ChEBI" id="CHEBI:29105"/>
        <note>catalytic</note>
    </ligand>
</feature>
<feature type="binding site" evidence="1">
    <location>
        <position position="268"/>
    </location>
    <ligand>
        <name>Zn(2+)</name>
        <dbReference type="ChEBI" id="CHEBI:29105"/>
        <note>catalytic</note>
    </ligand>
</feature>
<feature type="binding site" evidence="1">
    <location>
        <position position="271"/>
    </location>
    <ligand>
        <name>GTP</name>
        <dbReference type="ChEBI" id="CHEBI:37565"/>
    </ligand>
</feature>
<feature type="binding site" evidence="1">
    <location>
        <begin position="293"/>
        <end position="295"/>
    </location>
    <ligand>
        <name>GTP</name>
        <dbReference type="ChEBI" id="CHEBI:37565"/>
    </ligand>
</feature>
<feature type="binding site" evidence="1">
    <location>
        <position position="315"/>
    </location>
    <ligand>
        <name>GTP</name>
        <dbReference type="ChEBI" id="CHEBI:37565"/>
    </ligand>
</feature>
<feature type="binding site" evidence="1">
    <location>
        <position position="350"/>
    </location>
    <ligand>
        <name>GTP</name>
        <dbReference type="ChEBI" id="CHEBI:37565"/>
    </ligand>
</feature>
<feature type="binding site" evidence="1">
    <location>
        <position position="355"/>
    </location>
    <ligand>
        <name>GTP</name>
        <dbReference type="ChEBI" id="CHEBI:37565"/>
    </ligand>
</feature>
<feature type="site" description="Essential for DHBP synthase activity" evidence="1">
    <location>
        <position position="124"/>
    </location>
</feature>
<feature type="site" description="Essential for DHBP synthase activity" evidence="1">
    <location>
        <position position="162"/>
    </location>
</feature>
<organism>
    <name type="scientific">Bacillus thuringiensis subsp. konkukian (strain 97-27)</name>
    <dbReference type="NCBI Taxonomy" id="281309"/>
    <lineage>
        <taxon>Bacteria</taxon>
        <taxon>Bacillati</taxon>
        <taxon>Bacillota</taxon>
        <taxon>Bacilli</taxon>
        <taxon>Bacillales</taxon>
        <taxon>Bacillaceae</taxon>
        <taxon>Bacillus</taxon>
        <taxon>Bacillus cereus group</taxon>
    </lineage>
</organism>
<sequence>MFHRIEEALEDLKQGKVVIVCDDENRENEGDFIALAEYITPETINFMITHGRGLVCVPITEGYAERLQLEPMVSHNTDSHHTAFTVSIDHVSTTTGISAHERATTIQQLLNPASKGADFNRPGHIFPLIAKEGGVLRRAGHTEAAVDLAQLCGAEPAGVICEIINEDGTMARVPDLLQCAKQFDIKMITIEDLIAYRRHHETLVTREVEITLPTDFGTFQAIGYSNSLDTKEHIALVKGDISTGEPVLVRVHSECLTGDVFGSCRCDCGPQLHAALAQIEREGKGVLLYMRQEGRGIGLLNKLRAYKLQEEGFDTVEANEKLGFPADLRDYGIGAQILKDLGLQHLRLLTNNPRKIAGLQGYDLTVTERVPLQMPAKEENKTYLQTKVNKLGHLLNL</sequence>
<reference key="1">
    <citation type="journal article" date="2006" name="J. Bacteriol.">
        <title>Pathogenomic sequence analysis of Bacillus cereus and Bacillus thuringiensis isolates closely related to Bacillus anthracis.</title>
        <authorList>
            <person name="Han C.S."/>
            <person name="Xie G."/>
            <person name="Challacombe J.F."/>
            <person name="Altherr M.R."/>
            <person name="Bhotika S.S."/>
            <person name="Bruce D."/>
            <person name="Campbell C.S."/>
            <person name="Campbell M.L."/>
            <person name="Chen J."/>
            <person name="Chertkov O."/>
            <person name="Cleland C."/>
            <person name="Dimitrijevic M."/>
            <person name="Doggett N.A."/>
            <person name="Fawcett J.J."/>
            <person name="Glavina T."/>
            <person name="Goodwin L.A."/>
            <person name="Hill K.K."/>
            <person name="Hitchcock P."/>
            <person name="Jackson P.J."/>
            <person name="Keim P."/>
            <person name="Kewalramani A.R."/>
            <person name="Longmire J."/>
            <person name="Lucas S."/>
            <person name="Malfatti S."/>
            <person name="McMurry K."/>
            <person name="Meincke L.J."/>
            <person name="Misra M."/>
            <person name="Moseman B.L."/>
            <person name="Mundt M."/>
            <person name="Munk A.C."/>
            <person name="Okinaka R.T."/>
            <person name="Parson-Quintana B."/>
            <person name="Reilly L.P."/>
            <person name="Richardson P."/>
            <person name="Robinson D.L."/>
            <person name="Rubin E."/>
            <person name="Saunders E."/>
            <person name="Tapia R."/>
            <person name="Tesmer J.G."/>
            <person name="Thayer N."/>
            <person name="Thompson L.S."/>
            <person name="Tice H."/>
            <person name="Ticknor L.O."/>
            <person name="Wills P.L."/>
            <person name="Brettin T.S."/>
            <person name="Gilna P."/>
        </authorList>
    </citation>
    <scope>NUCLEOTIDE SEQUENCE [LARGE SCALE GENOMIC DNA]</scope>
    <source>
        <strain>97-27</strain>
    </source>
</reference>
<protein>
    <recommendedName>
        <fullName evidence="1">Riboflavin biosynthesis protein RibBA</fullName>
    </recommendedName>
    <domain>
        <recommendedName>
            <fullName evidence="1">3,4-dihydroxy-2-butanone 4-phosphate synthase</fullName>
            <shortName evidence="1">DHBP synthase</shortName>
            <ecNumber evidence="1">4.1.99.12</ecNumber>
        </recommendedName>
    </domain>
    <domain>
        <recommendedName>
            <fullName evidence="1">GTP cyclohydrolase-2</fullName>
            <ecNumber evidence="1">3.5.4.25</ecNumber>
        </recommendedName>
        <alternativeName>
            <fullName evidence="1">GTP cyclohydrolase II</fullName>
        </alternativeName>
    </domain>
</protein>
<accession>Q6HE54</accession>